<protein>
    <recommendedName>
        <fullName>RuvB-like helicase 1</fullName>
        <ecNumber>3.6.4.12</ecNumber>
    </recommendedName>
</protein>
<reference key="1">
    <citation type="journal article" date="2002" name="Nature">
        <title>The genome sequence of Schizosaccharomyces pombe.</title>
        <authorList>
            <person name="Wood V."/>
            <person name="Gwilliam R."/>
            <person name="Rajandream M.A."/>
            <person name="Lyne M.H."/>
            <person name="Lyne R."/>
            <person name="Stewart A."/>
            <person name="Sgouros J.G."/>
            <person name="Peat N."/>
            <person name="Hayles J."/>
            <person name="Baker S.G."/>
            <person name="Basham D."/>
            <person name="Bowman S."/>
            <person name="Brooks K."/>
            <person name="Brown D."/>
            <person name="Brown S."/>
            <person name="Chillingworth T."/>
            <person name="Churcher C.M."/>
            <person name="Collins M."/>
            <person name="Connor R."/>
            <person name="Cronin A."/>
            <person name="Davis P."/>
            <person name="Feltwell T."/>
            <person name="Fraser A."/>
            <person name="Gentles S."/>
            <person name="Goble A."/>
            <person name="Hamlin N."/>
            <person name="Harris D.E."/>
            <person name="Hidalgo J."/>
            <person name="Hodgson G."/>
            <person name="Holroyd S."/>
            <person name="Hornsby T."/>
            <person name="Howarth S."/>
            <person name="Huckle E.J."/>
            <person name="Hunt S."/>
            <person name="Jagels K."/>
            <person name="James K.D."/>
            <person name="Jones L."/>
            <person name="Jones M."/>
            <person name="Leather S."/>
            <person name="McDonald S."/>
            <person name="McLean J."/>
            <person name="Mooney P."/>
            <person name="Moule S."/>
            <person name="Mungall K.L."/>
            <person name="Murphy L.D."/>
            <person name="Niblett D."/>
            <person name="Odell C."/>
            <person name="Oliver K."/>
            <person name="O'Neil S."/>
            <person name="Pearson D."/>
            <person name="Quail M.A."/>
            <person name="Rabbinowitsch E."/>
            <person name="Rutherford K.M."/>
            <person name="Rutter S."/>
            <person name="Saunders D."/>
            <person name="Seeger K."/>
            <person name="Sharp S."/>
            <person name="Skelton J."/>
            <person name="Simmonds M.N."/>
            <person name="Squares R."/>
            <person name="Squares S."/>
            <person name="Stevens K."/>
            <person name="Taylor K."/>
            <person name="Taylor R.G."/>
            <person name="Tivey A."/>
            <person name="Walsh S.V."/>
            <person name="Warren T."/>
            <person name="Whitehead S."/>
            <person name="Woodward J.R."/>
            <person name="Volckaert G."/>
            <person name="Aert R."/>
            <person name="Robben J."/>
            <person name="Grymonprez B."/>
            <person name="Weltjens I."/>
            <person name="Vanstreels E."/>
            <person name="Rieger M."/>
            <person name="Schaefer M."/>
            <person name="Mueller-Auer S."/>
            <person name="Gabel C."/>
            <person name="Fuchs M."/>
            <person name="Duesterhoeft A."/>
            <person name="Fritzc C."/>
            <person name="Holzer E."/>
            <person name="Moestl D."/>
            <person name="Hilbert H."/>
            <person name="Borzym K."/>
            <person name="Langer I."/>
            <person name="Beck A."/>
            <person name="Lehrach H."/>
            <person name="Reinhardt R."/>
            <person name="Pohl T.M."/>
            <person name="Eger P."/>
            <person name="Zimmermann W."/>
            <person name="Wedler H."/>
            <person name="Wambutt R."/>
            <person name="Purnelle B."/>
            <person name="Goffeau A."/>
            <person name="Cadieu E."/>
            <person name="Dreano S."/>
            <person name="Gloux S."/>
            <person name="Lelaure V."/>
            <person name="Mottier S."/>
            <person name="Galibert F."/>
            <person name="Aves S.J."/>
            <person name="Xiang Z."/>
            <person name="Hunt C."/>
            <person name="Moore K."/>
            <person name="Hurst S.M."/>
            <person name="Lucas M."/>
            <person name="Rochet M."/>
            <person name="Gaillardin C."/>
            <person name="Tallada V.A."/>
            <person name="Garzon A."/>
            <person name="Thode G."/>
            <person name="Daga R.R."/>
            <person name="Cruzado L."/>
            <person name="Jimenez J."/>
            <person name="Sanchez M."/>
            <person name="del Rey F."/>
            <person name="Benito J."/>
            <person name="Dominguez A."/>
            <person name="Revuelta J.L."/>
            <person name="Moreno S."/>
            <person name="Armstrong J."/>
            <person name="Forsburg S.L."/>
            <person name="Cerutti L."/>
            <person name="Lowe T."/>
            <person name="McCombie W.R."/>
            <person name="Paulsen I."/>
            <person name="Potashkin J."/>
            <person name="Shpakovski G.V."/>
            <person name="Ussery D."/>
            <person name="Barrell B.G."/>
            <person name="Nurse P."/>
        </authorList>
    </citation>
    <scope>NUCLEOTIDE SEQUENCE [LARGE SCALE GENOMIC DNA]</scope>
    <source>
        <strain>972 / ATCC 24843</strain>
    </source>
</reference>
<sequence length="456" mass="50052">MVQISEVKGNGRDNRITTHSHIKGLGLKEDGTCESVGGGFIGQEKAREACGIITDLIKSKKFGGKGVLFAGGAGTGKTALALAIAQELGPKVPFCPMVGSEVYSSEIKKTEALMENFRRAIGLRVKETKEVYEGEVTEMVPEEAENPLGGYGKTISHVLLGLKTHKGTKQLKLDPSIYESLQREQVSTGDVIYIEANTGAVKRVGRSDAYATEFDLEAEEYVPMPKGEVHKRKEIVQDVTLHDLDIANARPQGGQDIMSMMGQLMKPKKTEITDKLRGEINKVVNKYIEQGIAELIPGVLFIDEVHMLDIECFTYLNQALESTISPIVIFASNRGICTIRGTEDIQAPHGIPTDLLDRLLIVRTLPYSESEIRSILQIRAKVENIILTDECLDKLAQEGSRTSLRYVIQLLTPVSIIASLHGNKEIGVQDIEECNDLFLDARRSAQVVKSSSGFLQ</sequence>
<keyword id="KW-0010">Activator</keyword>
<keyword id="KW-0067">ATP-binding</keyword>
<keyword id="KW-0156">Chromatin regulator</keyword>
<keyword id="KW-0227">DNA damage</keyword>
<keyword id="KW-0234">DNA repair</keyword>
<keyword id="KW-0347">Helicase</keyword>
<keyword id="KW-0378">Hydrolase</keyword>
<keyword id="KW-0547">Nucleotide-binding</keyword>
<keyword id="KW-0539">Nucleus</keyword>
<keyword id="KW-1185">Reference proteome</keyword>
<keyword id="KW-0804">Transcription</keyword>
<keyword id="KW-0805">Transcription regulation</keyword>
<gene>
    <name type="primary">rvb1</name>
    <name type="ORF">SPAPB8E5.09</name>
</gene>
<accession>Q9C0X6</accession>
<feature type="chain" id="PRO_0000165658" description="RuvB-like helicase 1">
    <location>
        <begin position="1"/>
        <end position="456"/>
    </location>
</feature>
<feature type="binding site" evidence="1">
    <location>
        <begin position="71"/>
        <end position="78"/>
    </location>
    <ligand>
        <name>ATP</name>
        <dbReference type="ChEBI" id="CHEBI:30616"/>
    </ligand>
</feature>
<organism>
    <name type="scientific">Schizosaccharomyces pombe (strain 972 / ATCC 24843)</name>
    <name type="common">Fission yeast</name>
    <dbReference type="NCBI Taxonomy" id="284812"/>
    <lineage>
        <taxon>Eukaryota</taxon>
        <taxon>Fungi</taxon>
        <taxon>Dikarya</taxon>
        <taxon>Ascomycota</taxon>
        <taxon>Taphrinomycotina</taxon>
        <taxon>Schizosaccharomycetes</taxon>
        <taxon>Schizosaccharomycetales</taxon>
        <taxon>Schizosaccharomycetaceae</taxon>
        <taxon>Schizosaccharomyces</taxon>
    </lineage>
</organism>
<evidence type="ECO:0000250" key="1"/>
<evidence type="ECO:0000305" key="2"/>
<comment type="function">
    <text evidence="1">DNA helicase which participates in several chromatin remodeling complexes, including the SWR1 and the INO80 complexes. The SWR1 complex mediates the ATP-dependent exchange of histone H2A for the H2A variant HZT1 leading to transcriptional regulation of selected genes by chromatin remodeling. The INO80 complex remodels chromatin by shifting nucleosomes and is involved in DNA repair. Also involved in pre-rRNA processing (By similarity).</text>
</comment>
<comment type="catalytic activity">
    <reaction>
        <text>ATP + H2O = ADP + phosphate + H(+)</text>
        <dbReference type="Rhea" id="RHEA:13065"/>
        <dbReference type="ChEBI" id="CHEBI:15377"/>
        <dbReference type="ChEBI" id="CHEBI:15378"/>
        <dbReference type="ChEBI" id="CHEBI:30616"/>
        <dbReference type="ChEBI" id="CHEBI:43474"/>
        <dbReference type="ChEBI" id="CHEBI:456216"/>
        <dbReference type="EC" id="3.6.4.12"/>
    </reaction>
</comment>
<comment type="subunit">
    <text evidence="1">May form heterododecamers with RVB2. Component of the SWR1 chromatin remodeling complex, the INO80 chromatin remodeling complex, and of the R2TP complex (By similarity).</text>
</comment>
<comment type="subcellular location">
    <subcellularLocation>
        <location evidence="1">Nucleus</location>
    </subcellularLocation>
</comment>
<comment type="similarity">
    <text evidence="2">Belongs to the RuvB family.</text>
</comment>
<dbReference type="EC" id="3.6.4.12"/>
<dbReference type="EMBL" id="CU329670">
    <property type="protein sequence ID" value="CAC37428.1"/>
    <property type="molecule type" value="Genomic_DNA"/>
</dbReference>
<dbReference type="RefSeq" id="NP_594783.1">
    <property type="nucleotide sequence ID" value="NM_001020211.2"/>
</dbReference>
<dbReference type="SMR" id="Q9C0X6"/>
<dbReference type="BioGRID" id="279655">
    <property type="interactions" value="24"/>
</dbReference>
<dbReference type="FunCoup" id="Q9C0X6">
    <property type="interactions" value="785"/>
</dbReference>
<dbReference type="IntAct" id="Q9C0X6">
    <property type="interactions" value="2"/>
</dbReference>
<dbReference type="MINT" id="Q9C0X6"/>
<dbReference type="STRING" id="284812.Q9C0X6"/>
<dbReference type="iPTMnet" id="Q9C0X6"/>
<dbReference type="PaxDb" id="4896-SPAPB8E5.09.1"/>
<dbReference type="EnsemblFungi" id="SPAPB8E5.09.1">
    <property type="protein sequence ID" value="SPAPB8E5.09.1:pep"/>
    <property type="gene ID" value="SPAPB8E5.09"/>
</dbReference>
<dbReference type="GeneID" id="2543227"/>
<dbReference type="KEGG" id="spo:2543227"/>
<dbReference type="PomBase" id="SPAPB8E5.09">
    <property type="gene designation" value="rvb1"/>
</dbReference>
<dbReference type="VEuPathDB" id="FungiDB:SPAPB8E5.09"/>
<dbReference type="eggNOG" id="KOG1942">
    <property type="taxonomic scope" value="Eukaryota"/>
</dbReference>
<dbReference type="HOGENOM" id="CLU_028311_1_1_1"/>
<dbReference type="InParanoid" id="Q9C0X6"/>
<dbReference type="OMA" id="RTLPYNK"/>
<dbReference type="PhylomeDB" id="Q9C0X6"/>
<dbReference type="Reactome" id="R-SPO-5689880">
    <property type="pathway name" value="Ub-specific processing proteases"/>
</dbReference>
<dbReference type="PRO" id="PR:Q9C0X6"/>
<dbReference type="Proteomes" id="UP000002485">
    <property type="component" value="Chromosome I"/>
</dbReference>
<dbReference type="GO" id="GO:0005829">
    <property type="term" value="C:cytosol"/>
    <property type="evidence" value="ECO:0007005"/>
    <property type="project" value="PomBase"/>
</dbReference>
<dbReference type="GO" id="GO:0031011">
    <property type="term" value="C:Ino80 complex"/>
    <property type="evidence" value="ECO:0000314"/>
    <property type="project" value="PomBase"/>
</dbReference>
<dbReference type="GO" id="GO:0035267">
    <property type="term" value="C:NuA4 histone acetyltransferase complex"/>
    <property type="evidence" value="ECO:0000318"/>
    <property type="project" value="GO_Central"/>
</dbReference>
<dbReference type="GO" id="GO:0005634">
    <property type="term" value="C:nucleus"/>
    <property type="evidence" value="ECO:0007005"/>
    <property type="project" value="PomBase"/>
</dbReference>
<dbReference type="GO" id="GO:0097255">
    <property type="term" value="C:R2TP complex"/>
    <property type="evidence" value="ECO:0000318"/>
    <property type="project" value="GO_Central"/>
</dbReference>
<dbReference type="GO" id="GO:0000812">
    <property type="term" value="C:Swr1 complex"/>
    <property type="evidence" value="ECO:0000314"/>
    <property type="project" value="PomBase"/>
</dbReference>
<dbReference type="GO" id="GO:0005524">
    <property type="term" value="F:ATP binding"/>
    <property type="evidence" value="ECO:0007669"/>
    <property type="project" value="UniProtKB-KW"/>
</dbReference>
<dbReference type="GO" id="GO:0016887">
    <property type="term" value="F:ATP hydrolysis activity"/>
    <property type="evidence" value="ECO:0000303"/>
    <property type="project" value="PomBase"/>
</dbReference>
<dbReference type="GO" id="GO:0140658">
    <property type="term" value="F:ATP-dependent chromatin remodeler activity"/>
    <property type="evidence" value="ECO:0000303"/>
    <property type="project" value="PomBase"/>
</dbReference>
<dbReference type="GO" id="GO:0003678">
    <property type="term" value="F:DNA helicase activity"/>
    <property type="evidence" value="ECO:0000318"/>
    <property type="project" value="GO_Central"/>
</dbReference>
<dbReference type="GO" id="GO:0000492">
    <property type="term" value="P:box C/D snoRNP assembly"/>
    <property type="evidence" value="ECO:0000318"/>
    <property type="project" value="GO_Central"/>
</dbReference>
<dbReference type="GO" id="GO:0006338">
    <property type="term" value="P:chromatin remodeling"/>
    <property type="evidence" value="ECO:0000318"/>
    <property type="project" value="GO_Central"/>
</dbReference>
<dbReference type="GO" id="GO:0006281">
    <property type="term" value="P:DNA repair"/>
    <property type="evidence" value="ECO:0007669"/>
    <property type="project" value="UniProtKB-KW"/>
</dbReference>
<dbReference type="GO" id="GO:0006357">
    <property type="term" value="P:regulation of transcription by RNA polymerase II"/>
    <property type="evidence" value="ECO:0000318"/>
    <property type="project" value="GO_Central"/>
</dbReference>
<dbReference type="FunFam" id="1.10.8.60:FF:000010">
    <property type="entry name" value="RuvB-like helicase"/>
    <property type="match status" value="1"/>
</dbReference>
<dbReference type="FunFam" id="2.40.50.360:FF:000001">
    <property type="entry name" value="RuvB-like helicase"/>
    <property type="match status" value="1"/>
</dbReference>
<dbReference type="Gene3D" id="1.10.8.60">
    <property type="match status" value="1"/>
</dbReference>
<dbReference type="Gene3D" id="3.40.50.300">
    <property type="entry name" value="P-loop containing nucleotide triphosphate hydrolases"/>
    <property type="match status" value="1"/>
</dbReference>
<dbReference type="Gene3D" id="2.40.50.360">
    <property type="entry name" value="RuvB-like helicase, domain II"/>
    <property type="match status" value="1"/>
</dbReference>
<dbReference type="InterPro" id="IPR003593">
    <property type="entry name" value="AAA+_ATPase"/>
</dbReference>
<dbReference type="InterPro" id="IPR027417">
    <property type="entry name" value="P-loop_NTPase"/>
</dbReference>
<dbReference type="InterPro" id="IPR027238">
    <property type="entry name" value="RuvB-like"/>
</dbReference>
<dbReference type="InterPro" id="IPR041048">
    <property type="entry name" value="RuvB-like_C"/>
</dbReference>
<dbReference type="InterPro" id="IPR042487">
    <property type="entry name" value="RuvBL1/2_DNA/RNA_bd_dom"/>
</dbReference>
<dbReference type="InterPro" id="IPR010339">
    <property type="entry name" value="TIP49_P-loop"/>
</dbReference>
<dbReference type="PANTHER" id="PTHR11093">
    <property type="entry name" value="RUVB-RELATED REPTIN AND PONTIN"/>
    <property type="match status" value="1"/>
</dbReference>
<dbReference type="Pfam" id="PF06068">
    <property type="entry name" value="TIP49"/>
    <property type="match status" value="1"/>
</dbReference>
<dbReference type="Pfam" id="PF17856">
    <property type="entry name" value="TIP49_C"/>
    <property type="match status" value="1"/>
</dbReference>
<dbReference type="SMART" id="SM00382">
    <property type="entry name" value="AAA"/>
    <property type="match status" value="1"/>
</dbReference>
<dbReference type="SUPFAM" id="SSF52540">
    <property type="entry name" value="P-loop containing nucleoside triphosphate hydrolases"/>
    <property type="match status" value="1"/>
</dbReference>
<name>RUVB1_SCHPO</name>
<proteinExistence type="inferred from homology"/>